<keyword id="KW-0349">Heme</keyword>
<keyword id="KW-0408">Iron</keyword>
<keyword id="KW-0472">Membrane</keyword>
<keyword id="KW-0479">Metal-binding</keyword>
<keyword id="KW-0503">Monooxygenase</keyword>
<keyword id="KW-0560">Oxidoreductase</keyword>
<keyword id="KW-1185">Reference proteome</keyword>
<keyword id="KW-0812">Transmembrane</keyword>
<keyword id="KW-1133">Transmembrane helix</keyword>
<accession>Q55EK2</accession>
<comment type="cofactor">
    <cofactor evidence="1">
        <name>heme</name>
        <dbReference type="ChEBI" id="CHEBI:30413"/>
    </cofactor>
</comment>
<comment type="subcellular location">
    <subcellularLocation>
        <location evidence="3">Membrane</location>
        <topology evidence="3">Single-pass membrane protein</topology>
    </subcellularLocation>
</comment>
<comment type="similarity">
    <text evidence="3">Belongs to the cytochrome P450 family.</text>
</comment>
<gene>
    <name type="primary">cyp524A1</name>
    <name type="ORF">DDB_G0269016</name>
</gene>
<proteinExistence type="inferred from homology"/>
<organism>
    <name type="scientific">Dictyostelium discoideum</name>
    <name type="common">Social amoeba</name>
    <dbReference type="NCBI Taxonomy" id="44689"/>
    <lineage>
        <taxon>Eukaryota</taxon>
        <taxon>Amoebozoa</taxon>
        <taxon>Evosea</taxon>
        <taxon>Eumycetozoa</taxon>
        <taxon>Dictyostelia</taxon>
        <taxon>Dictyosteliales</taxon>
        <taxon>Dictyosteliaceae</taxon>
        <taxon>Dictyostelium</taxon>
    </lineage>
</organism>
<feature type="chain" id="PRO_0000318841" description="Probable cytochrome P450 524A1">
    <location>
        <begin position="1"/>
        <end position="532"/>
    </location>
</feature>
<feature type="transmembrane region" description="Helical" evidence="2">
    <location>
        <begin position="8"/>
        <end position="28"/>
    </location>
</feature>
<feature type="binding site" description="axial binding residue" evidence="1">
    <location>
        <position position="478"/>
    </location>
    <ligand>
        <name>heme</name>
        <dbReference type="ChEBI" id="CHEBI:30413"/>
    </ligand>
    <ligandPart>
        <name>Fe</name>
        <dbReference type="ChEBI" id="CHEBI:18248"/>
    </ligandPart>
</feature>
<reference key="1">
    <citation type="journal article" date="2005" name="Nature">
        <title>The genome of the social amoeba Dictyostelium discoideum.</title>
        <authorList>
            <person name="Eichinger L."/>
            <person name="Pachebat J.A."/>
            <person name="Gloeckner G."/>
            <person name="Rajandream M.A."/>
            <person name="Sucgang R."/>
            <person name="Berriman M."/>
            <person name="Song J."/>
            <person name="Olsen R."/>
            <person name="Szafranski K."/>
            <person name="Xu Q."/>
            <person name="Tunggal B."/>
            <person name="Kummerfeld S."/>
            <person name="Madera M."/>
            <person name="Konfortov B.A."/>
            <person name="Rivero F."/>
            <person name="Bankier A.T."/>
            <person name="Lehmann R."/>
            <person name="Hamlin N."/>
            <person name="Davies R."/>
            <person name="Gaudet P."/>
            <person name="Fey P."/>
            <person name="Pilcher K."/>
            <person name="Chen G."/>
            <person name="Saunders D."/>
            <person name="Sodergren E.J."/>
            <person name="Davis P."/>
            <person name="Kerhornou A."/>
            <person name="Nie X."/>
            <person name="Hall N."/>
            <person name="Anjard C."/>
            <person name="Hemphill L."/>
            <person name="Bason N."/>
            <person name="Farbrother P."/>
            <person name="Desany B."/>
            <person name="Just E."/>
            <person name="Morio T."/>
            <person name="Rost R."/>
            <person name="Churcher C.M."/>
            <person name="Cooper J."/>
            <person name="Haydock S."/>
            <person name="van Driessche N."/>
            <person name="Cronin A."/>
            <person name="Goodhead I."/>
            <person name="Muzny D.M."/>
            <person name="Mourier T."/>
            <person name="Pain A."/>
            <person name="Lu M."/>
            <person name="Harper D."/>
            <person name="Lindsay R."/>
            <person name="Hauser H."/>
            <person name="James K.D."/>
            <person name="Quiles M."/>
            <person name="Madan Babu M."/>
            <person name="Saito T."/>
            <person name="Buchrieser C."/>
            <person name="Wardroper A."/>
            <person name="Felder M."/>
            <person name="Thangavelu M."/>
            <person name="Johnson D."/>
            <person name="Knights A."/>
            <person name="Loulseged H."/>
            <person name="Mungall K.L."/>
            <person name="Oliver K."/>
            <person name="Price C."/>
            <person name="Quail M.A."/>
            <person name="Urushihara H."/>
            <person name="Hernandez J."/>
            <person name="Rabbinowitsch E."/>
            <person name="Steffen D."/>
            <person name="Sanders M."/>
            <person name="Ma J."/>
            <person name="Kohara Y."/>
            <person name="Sharp S."/>
            <person name="Simmonds M.N."/>
            <person name="Spiegler S."/>
            <person name="Tivey A."/>
            <person name="Sugano S."/>
            <person name="White B."/>
            <person name="Walker D."/>
            <person name="Woodward J.R."/>
            <person name="Winckler T."/>
            <person name="Tanaka Y."/>
            <person name="Shaulsky G."/>
            <person name="Schleicher M."/>
            <person name="Weinstock G.M."/>
            <person name="Rosenthal A."/>
            <person name="Cox E.C."/>
            <person name="Chisholm R.L."/>
            <person name="Gibbs R.A."/>
            <person name="Loomis W.F."/>
            <person name="Platzer M."/>
            <person name="Kay R.R."/>
            <person name="Williams J.G."/>
            <person name="Dear P.H."/>
            <person name="Noegel A.A."/>
            <person name="Barrell B.G."/>
            <person name="Kuspa A."/>
        </authorList>
    </citation>
    <scope>NUCLEOTIDE SEQUENCE [LARGE SCALE GENOMIC DNA]</scope>
    <source>
        <strain>AX4</strain>
    </source>
</reference>
<sequence length="532" mass="59871">MKTPTKYFIIFILLAALAVFVSEATSKVGQQTTTTTQQVKCSGLQCTLNKLIVAVGKFTIKQILVGIVIVLATIALHQQYVITQKKGSLPGPSFVPPFFGMLFQLIFTPFSFYEKQEKYGPISWTSIMNKFVLFVTDAEINRQVFKEENAKLYLSLGAKKILTEKAIPFIEGAPHRQLRKQLLPLFTIRALSSYLPIQESIVDEHIAMWIKNGKADINARNNCRDLNMAISTGVFVGNNTPESVRDDIAKNFFVMNEGFLCLPIDLPGTTLRKAINARVRLVEIFTDIIAKSRKRMGDGEKPQSLIDLWVEHFLNCPEEERDELSNDTIIFTLLSFMFASQDALTSSLVWTVQLMAEHPDILAKVRAEQASLRPNNEKLDLDTMRQATYTRMVVSEILRFRPPAVMVPHENIEDIVIGDNVHVPKGTMILPSIWSAHFQEGGYSDPYKFDPQRFDSVRKEDVTCAKNSLVFGAGPHFCIGKELAKNQIEVFLTKLAMSTEWTHNKTPGGDEIIFGPTIFPKDGCNITIKARN</sequence>
<protein>
    <recommendedName>
        <fullName>Probable cytochrome P450 524A1</fullName>
        <ecNumber>1.14.-.-</ecNumber>
    </recommendedName>
</protein>
<evidence type="ECO:0000250" key="1"/>
<evidence type="ECO:0000255" key="2"/>
<evidence type="ECO:0000305" key="3"/>
<dbReference type="EC" id="1.14.-.-"/>
<dbReference type="EMBL" id="AAFI02000004">
    <property type="protein sequence ID" value="EAL73097.1"/>
    <property type="molecule type" value="Genomic_DNA"/>
</dbReference>
<dbReference type="RefSeq" id="XP_647018.1">
    <property type="nucleotide sequence ID" value="XM_641926.1"/>
</dbReference>
<dbReference type="SMR" id="Q55EK2"/>
<dbReference type="STRING" id="44689.Q55EK2"/>
<dbReference type="PaxDb" id="44689-DDB0233032"/>
<dbReference type="EnsemblProtists" id="EAL73097">
    <property type="protein sequence ID" value="EAL73097"/>
    <property type="gene ID" value="DDB_G0269016"/>
</dbReference>
<dbReference type="GeneID" id="8616711"/>
<dbReference type="KEGG" id="ddi:DDB_G0269016"/>
<dbReference type="dictyBase" id="DDB_G0269016">
    <property type="gene designation" value="cyp524A1"/>
</dbReference>
<dbReference type="VEuPathDB" id="AmoebaDB:DDB_G0269016"/>
<dbReference type="eggNOG" id="KOG0157">
    <property type="taxonomic scope" value="Eukaryota"/>
</dbReference>
<dbReference type="HOGENOM" id="CLU_023517_1_0_1"/>
<dbReference type="InParanoid" id="Q55EK2"/>
<dbReference type="OMA" id="KCIGLEY"/>
<dbReference type="PhylomeDB" id="Q55EK2"/>
<dbReference type="PRO" id="PR:Q55EK2"/>
<dbReference type="Proteomes" id="UP000002195">
    <property type="component" value="Chromosome 1"/>
</dbReference>
<dbReference type="GO" id="GO:0016020">
    <property type="term" value="C:membrane"/>
    <property type="evidence" value="ECO:0007669"/>
    <property type="project" value="UniProtKB-SubCell"/>
</dbReference>
<dbReference type="GO" id="GO:0020037">
    <property type="term" value="F:heme binding"/>
    <property type="evidence" value="ECO:0007669"/>
    <property type="project" value="InterPro"/>
</dbReference>
<dbReference type="GO" id="GO:0005506">
    <property type="term" value="F:iron ion binding"/>
    <property type="evidence" value="ECO:0007669"/>
    <property type="project" value="InterPro"/>
</dbReference>
<dbReference type="GO" id="GO:0004497">
    <property type="term" value="F:monooxygenase activity"/>
    <property type="evidence" value="ECO:0007669"/>
    <property type="project" value="UniProtKB-KW"/>
</dbReference>
<dbReference type="GO" id="GO:0016491">
    <property type="term" value="F:oxidoreductase activity"/>
    <property type="evidence" value="ECO:0000318"/>
    <property type="project" value="GO_Central"/>
</dbReference>
<dbReference type="GO" id="GO:0016705">
    <property type="term" value="F:oxidoreductase activity, acting on paired donors, with incorporation or reduction of molecular oxygen"/>
    <property type="evidence" value="ECO:0007669"/>
    <property type="project" value="InterPro"/>
</dbReference>
<dbReference type="CDD" id="cd11082">
    <property type="entry name" value="CYP61_CYP710"/>
    <property type="match status" value="1"/>
</dbReference>
<dbReference type="FunFam" id="1.10.630.10:FF:000021">
    <property type="entry name" value="Cytochrome P450 61"/>
    <property type="match status" value="1"/>
</dbReference>
<dbReference type="Gene3D" id="1.10.630.10">
    <property type="entry name" value="Cytochrome P450"/>
    <property type="match status" value="1"/>
</dbReference>
<dbReference type="InterPro" id="IPR001128">
    <property type="entry name" value="Cyt_P450"/>
</dbReference>
<dbReference type="InterPro" id="IPR017972">
    <property type="entry name" value="Cyt_P450_CS"/>
</dbReference>
<dbReference type="InterPro" id="IPR002401">
    <property type="entry name" value="Cyt_P450_E_grp-I"/>
</dbReference>
<dbReference type="InterPro" id="IPR036396">
    <property type="entry name" value="Cyt_P450_sf"/>
</dbReference>
<dbReference type="PANTHER" id="PTHR24286:SF228">
    <property type="entry name" value="C-22 STEROL DESATURASE ERG5"/>
    <property type="match status" value="1"/>
</dbReference>
<dbReference type="PANTHER" id="PTHR24286">
    <property type="entry name" value="CYTOCHROME P450 26"/>
    <property type="match status" value="1"/>
</dbReference>
<dbReference type="Pfam" id="PF00067">
    <property type="entry name" value="p450"/>
    <property type="match status" value="1"/>
</dbReference>
<dbReference type="PRINTS" id="PR00463">
    <property type="entry name" value="EP450I"/>
</dbReference>
<dbReference type="PRINTS" id="PR00385">
    <property type="entry name" value="P450"/>
</dbReference>
<dbReference type="SUPFAM" id="SSF48264">
    <property type="entry name" value="Cytochrome P450"/>
    <property type="match status" value="1"/>
</dbReference>
<dbReference type="PROSITE" id="PS00086">
    <property type="entry name" value="CYTOCHROME_P450"/>
    <property type="match status" value="1"/>
</dbReference>
<name>C524A_DICDI</name>